<name>RL9_THEAB</name>
<gene>
    <name evidence="1" type="primary">rplI</name>
    <name type="ordered locus">THA_1739</name>
</gene>
<comment type="function">
    <text evidence="1">Binds to the 23S rRNA.</text>
</comment>
<comment type="similarity">
    <text evidence="1">Belongs to the bacterial ribosomal protein bL9 family.</text>
</comment>
<proteinExistence type="inferred from homology"/>
<feature type="chain" id="PRO_1000126984" description="Large ribosomal subunit protein bL9">
    <location>
        <begin position="1"/>
        <end position="151"/>
    </location>
</feature>
<organism>
    <name type="scientific">Thermosipho africanus (strain TCF52B)</name>
    <dbReference type="NCBI Taxonomy" id="484019"/>
    <lineage>
        <taxon>Bacteria</taxon>
        <taxon>Thermotogati</taxon>
        <taxon>Thermotogota</taxon>
        <taxon>Thermotogae</taxon>
        <taxon>Thermotogales</taxon>
        <taxon>Fervidobacteriaceae</taxon>
        <taxon>Thermosipho</taxon>
    </lineage>
</organism>
<keyword id="KW-1185">Reference proteome</keyword>
<keyword id="KW-0687">Ribonucleoprotein</keyword>
<keyword id="KW-0689">Ribosomal protein</keyword>
<keyword id="KW-0694">RNA-binding</keyword>
<keyword id="KW-0699">rRNA-binding</keyword>
<evidence type="ECO:0000255" key="1">
    <source>
        <dbReference type="HAMAP-Rule" id="MF_00503"/>
    </source>
</evidence>
<evidence type="ECO:0000305" key="2"/>
<dbReference type="EMBL" id="CP001185">
    <property type="protein sequence ID" value="ACJ76174.1"/>
    <property type="molecule type" value="Genomic_DNA"/>
</dbReference>
<dbReference type="RefSeq" id="WP_012580380.1">
    <property type="nucleotide sequence ID" value="NC_011653.1"/>
</dbReference>
<dbReference type="SMR" id="B7IDU7"/>
<dbReference type="STRING" id="484019.THA_1739"/>
<dbReference type="KEGG" id="taf:THA_1739"/>
<dbReference type="eggNOG" id="COG0359">
    <property type="taxonomic scope" value="Bacteria"/>
</dbReference>
<dbReference type="HOGENOM" id="CLU_078938_3_0_0"/>
<dbReference type="OrthoDB" id="9788336at2"/>
<dbReference type="Proteomes" id="UP000002453">
    <property type="component" value="Chromosome"/>
</dbReference>
<dbReference type="GO" id="GO:1990904">
    <property type="term" value="C:ribonucleoprotein complex"/>
    <property type="evidence" value="ECO:0007669"/>
    <property type="project" value="UniProtKB-KW"/>
</dbReference>
<dbReference type="GO" id="GO:0005840">
    <property type="term" value="C:ribosome"/>
    <property type="evidence" value="ECO:0007669"/>
    <property type="project" value="UniProtKB-KW"/>
</dbReference>
<dbReference type="GO" id="GO:0019843">
    <property type="term" value="F:rRNA binding"/>
    <property type="evidence" value="ECO:0007669"/>
    <property type="project" value="UniProtKB-UniRule"/>
</dbReference>
<dbReference type="GO" id="GO:0003735">
    <property type="term" value="F:structural constituent of ribosome"/>
    <property type="evidence" value="ECO:0007669"/>
    <property type="project" value="InterPro"/>
</dbReference>
<dbReference type="GO" id="GO:0006412">
    <property type="term" value="P:translation"/>
    <property type="evidence" value="ECO:0007669"/>
    <property type="project" value="UniProtKB-UniRule"/>
</dbReference>
<dbReference type="FunFam" id="3.40.5.10:FF:000002">
    <property type="entry name" value="50S ribosomal protein L9"/>
    <property type="match status" value="1"/>
</dbReference>
<dbReference type="Gene3D" id="3.10.430.100">
    <property type="entry name" value="Ribosomal protein L9, C-terminal domain"/>
    <property type="match status" value="1"/>
</dbReference>
<dbReference type="Gene3D" id="3.40.5.10">
    <property type="entry name" value="Ribosomal protein L9, N-terminal domain"/>
    <property type="match status" value="1"/>
</dbReference>
<dbReference type="HAMAP" id="MF_00503">
    <property type="entry name" value="Ribosomal_bL9"/>
    <property type="match status" value="1"/>
</dbReference>
<dbReference type="InterPro" id="IPR000244">
    <property type="entry name" value="Ribosomal_bL9"/>
</dbReference>
<dbReference type="InterPro" id="IPR009027">
    <property type="entry name" value="Ribosomal_bL9/RNase_H1_N"/>
</dbReference>
<dbReference type="InterPro" id="IPR020594">
    <property type="entry name" value="Ribosomal_bL9_bac/chp"/>
</dbReference>
<dbReference type="InterPro" id="IPR020069">
    <property type="entry name" value="Ribosomal_bL9_C"/>
</dbReference>
<dbReference type="InterPro" id="IPR036791">
    <property type="entry name" value="Ribosomal_bL9_C_sf"/>
</dbReference>
<dbReference type="InterPro" id="IPR020070">
    <property type="entry name" value="Ribosomal_bL9_N"/>
</dbReference>
<dbReference type="InterPro" id="IPR036935">
    <property type="entry name" value="Ribosomal_bL9_N_sf"/>
</dbReference>
<dbReference type="NCBIfam" id="TIGR00158">
    <property type="entry name" value="L9"/>
    <property type="match status" value="1"/>
</dbReference>
<dbReference type="PANTHER" id="PTHR21368">
    <property type="entry name" value="50S RIBOSOMAL PROTEIN L9"/>
    <property type="match status" value="1"/>
</dbReference>
<dbReference type="Pfam" id="PF03948">
    <property type="entry name" value="Ribosomal_L9_C"/>
    <property type="match status" value="1"/>
</dbReference>
<dbReference type="Pfam" id="PF01281">
    <property type="entry name" value="Ribosomal_L9_N"/>
    <property type="match status" value="1"/>
</dbReference>
<dbReference type="SUPFAM" id="SSF55658">
    <property type="entry name" value="L9 N-domain-like"/>
    <property type="match status" value="1"/>
</dbReference>
<dbReference type="SUPFAM" id="SSF55653">
    <property type="entry name" value="Ribosomal protein L9 C-domain"/>
    <property type="match status" value="1"/>
</dbReference>
<dbReference type="PROSITE" id="PS00651">
    <property type="entry name" value="RIBOSOMAL_L9"/>
    <property type="match status" value="1"/>
</dbReference>
<reference key="1">
    <citation type="journal article" date="2009" name="J. Bacteriol.">
        <title>The genome of Thermosipho africanus TCF52B: lateral genetic connections to the Firmicutes and Archaea.</title>
        <authorList>
            <person name="Nesboe C.L."/>
            <person name="Bapteste E."/>
            <person name="Curtis B."/>
            <person name="Dahle H."/>
            <person name="Lopez P."/>
            <person name="Macleod D."/>
            <person name="Dlutek M."/>
            <person name="Bowman S."/>
            <person name="Zhaxybayeva O."/>
            <person name="Birkeland N.-K."/>
            <person name="Doolittle W.F."/>
        </authorList>
    </citation>
    <scope>NUCLEOTIDE SEQUENCE [LARGE SCALE GENOMIC DNA]</scope>
    <source>
        <strain>TCF52B</strain>
    </source>
</reference>
<sequence>MKVVLLKDVAKIGKKGEVKNVSDGYARNFLIPKGLALEATPAVMKQLKAQKMKEEEEKKKIKQESEELLKLLQKHLYKIPVKTGGSGKLFGALTNADIAKAISEKTGKDIDKKHIVLNKPIKELGLYEITVKLPEGITGKIKVEVVQEGKN</sequence>
<protein>
    <recommendedName>
        <fullName evidence="1">Large ribosomal subunit protein bL9</fullName>
    </recommendedName>
    <alternativeName>
        <fullName evidence="2">50S ribosomal protein L9</fullName>
    </alternativeName>
</protein>
<accession>B7IDU7</accession>